<name>RPOZ_BACAC</name>
<proteinExistence type="inferred from homology"/>
<keyword id="KW-0240">DNA-directed RNA polymerase</keyword>
<keyword id="KW-0548">Nucleotidyltransferase</keyword>
<keyword id="KW-0804">Transcription</keyword>
<keyword id="KW-0808">Transferase</keyword>
<organism>
    <name type="scientific">Bacillus anthracis (strain CDC 684 / NRRL 3495)</name>
    <dbReference type="NCBI Taxonomy" id="568206"/>
    <lineage>
        <taxon>Bacteria</taxon>
        <taxon>Bacillati</taxon>
        <taxon>Bacillota</taxon>
        <taxon>Bacilli</taxon>
        <taxon>Bacillales</taxon>
        <taxon>Bacillaceae</taxon>
        <taxon>Bacillus</taxon>
        <taxon>Bacillus cereus group</taxon>
    </lineage>
</organism>
<protein>
    <recommendedName>
        <fullName evidence="1">DNA-directed RNA polymerase subunit omega</fullName>
        <shortName evidence="1">RNAP omega subunit</shortName>
        <ecNumber evidence="1">2.7.7.6</ecNumber>
    </recommendedName>
    <alternativeName>
        <fullName evidence="1">RNA polymerase omega subunit</fullName>
    </alternativeName>
    <alternativeName>
        <fullName evidence="1">Transcriptase subunit omega</fullName>
    </alternativeName>
</protein>
<sequence length="70" mass="7752">MLNPSIDSLLTKIDSKYTLVTVAAKRAREMQLANNCVVEKPVSHKCVGKALEEIDMEALSYVPSEDKVTE</sequence>
<evidence type="ECO:0000255" key="1">
    <source>
        <dbReference type="HAMAP-Rule" id="MF_00366"/>
    </source>
</evidence>
<reference key="1">
    <citation type="submission" date="2008-10" db="EMBL/GenBank/DDBJ databases">
        <title>Genome sequence of Bacillus anthracis str. CDC 684.</title>
        <authorList>
            <person name="Dodson R.J."/>
            <person name="Munk A.C."/>
            <person name="Brettin T."/>
            <person name="Bruce D."/>
            <person name="Detter C."/>
            <person name="Tapia R."/>
            <person name="Han C."/>
            <person name="Sutton G."/>
            <person name="Sims D."/>
        </authorList>
    </citation>
    <scope>NUCLEOTIDE SEQUENCE [LARGE SCALE GENOMIC DNA]</scope>
    <source>
        <strain>CDC 684 / NRRL 3495</strain>
    </source>
</reference>
<accession>C3L757</accession>
<gene>
    <name evidence="1" type="primary">rpoZ</name>
    <name type="ordered locus">BAMEG_0623</name>
</gene>
<comment type="function">
    <text evidence="1">Promotes RNA polymerase assembly. Latches the N- and C-terminal regions of the beta' subunit thereby facilitating its interaction with the beta and alpha subunits.</text>
</comment>
<comment type="catalytic activity">
    <reaction evidence="1">
        <text>RNA(n) + a ribonucleoside 5'-triphosphate = RNA(n+1) + diphosphate</text>
        <dbReference type="Rhea" id="RHEA:21248"/>
        <dbReference type="Rhea" id="RHEA-COMP:14527"/>
        <dbReference type="Rhea" id="RHEA-COMP:17342"/>
        <dbReference type="ChEBI" id="CHEBI:33019"/>
        <dbReference type="ChEBI" id="CHEBI:61557"/>
        <dbReference type="ChEBI" id="CHEBI:140395"/>
        <dbReference type="EC" id="2.7.7.6"/>
    </reaction>
</comment>
<comment type="subunit">
    <text evidence="1">The RNAP catalytic core consists of 2 alpha, 1 beta, 1 beta' and 1 omega subunit. When a sigma factor is associated with the core the holoenzyme is formed, which can initiate transcription.</text>
</comment>
<comment type="similarity">
    <text evidence="1">Belongs to the RNA polymerase subunit omega family.</text>
</comment>
<dbReference type="EC" id="2.7.7.6" evidence="1"/>
<dbReference type="EMBL" id="CP001215">
    <property type="protein sequence ID" value="ACP15764.1"/>
    <property type="molecule type" value="Genomic_DNA"/>
</dbReference>
<dbReference type="RefSeq" id="WP_000933970.1">
    <property type="nucleotide sequence ID" value="NC_012581.1"/>
</dbReference>
<dbReference type="SMR" id="C3L757"/>
<dbReference type="GeneID" id="75087006"/>
<dbReference type="KEGG" id="bah:BAMEG_0623"/>
<dbReference type="HOGENOM" id="CLU_125406_6_0_9"/>
<dbReference type="GO" id="GO:0000428">
    <property type="term" value="C:DNA-directed RNA polymerase complex"/>
    <property type="evidence" value="ECO:0007669"/>
    <property type="project" value="UniProtKB-KW"/>
</dbReference>
<dbReference type="GO" id="GO:0003677">
    <property type="term" value="F:DNA binding"/>
    <property type="evidence" value="ECO:0007669"/>
    <property type="project" value="UniProtKB-UniRule"/>
</dbReference>
<dbReference type="GO" id="GO:0003899">
    <property type="term" value="F:DNA-directed RNA polymerase activity"/>
    <property type="evidence" value="ECO:0007669"/>
    <property type="project" value="UniProtKB-UniRule"/>
</dbReference>
<dbReference type="GO" id="GO:0006351">
    <property type="term" value="P:DNA-templated transcription"/>
    <property type="evidence" value="ECO:0007669"/>
    <property type="project" value="UniProtKB-UniRule"/>
</dbReference>
<dbReference type="Gene3D" id="3.90.940.10">
    <property type="match status" value="1"/>
</dbReference>
<dbReference type="HAMAP" id="MF_00366">
    <property type="entry name" value="RNApol_bact_RpoZ"/>
    <property type="match status" value="1"/>
</dbReference>
<dbReference type="InterPro" id="IPR003716">
    <property type="entry name" value="DNA-dir_RNA_pol_omega"/>
</dbReference>
<dbReference type="InterPro" id="IPR006110">
    <property type="entry name" value="Pol_omega/Rpo6/RPB6"/>
</dbReference>
<dbReference type="InterPro" id="IPR036161">
    <property type="entry name" value="RPB6/omega-like_sf"/>
</dbReference>
<dbReference type="NCBIfam" id="TIGR00690">
    <property type="entry name" value="rpoZ"/>
    <property type="match status" value="1"/>
</dbReference>
<dbReference type="PANTHER" id="PTHR34476">
    <property type="entry name" value="DNA-DIRECTED RNA POLYMERASE SUBUNIT OMEGA"/>
    <property type="match status" value="1"/>
</dbReference>
<dbReference type="PANTHER" id="PTHR34476:SF1">
    <property type="entry name" value="DNA-DIRECTED RNA POLYMERASE SUBUNIT OMEGA"/>
    <property type="match status" value="1"/>
</dbReference>
<dbReference type="Pfam" id="PF01192">
    <property type="entry name" value="RNA_pol_Rpb6"/>
    <property type="match status" value="1"/>
</dbReference>
<dbReference type="SMART" id="SM01409">
    <property type="entry name" value="RNA_pol_Rpb6"/>
    <property type="match status" value="1"/>
</dbReference>
<dbReference type="SUPFAM" id="SSF63562">
    <property type="entry name" value="RPB6/omega subunit-like"/>
    <property type="match status" value="1"/>
</dbReference>
<feature type="chain" id="PRO_1000133716" description="DNA-directed RNA polymerase subunit omega">
    <location>
        <begin position="1"/>
        <end position="70"/>
    </location>
</feature>